<keyword id="KW-0044">Antibiotic</keyword>
<keyword id="KW-0929">Antimicrobial</keyword>
<keyword id="KW-1015">Disulfide bond</keyword>
<keyword id="KW-0325">Glycoprotein</keyword>
<keyword id="KW-1267">Proteomics identification</keyword>
<keyword id="KW-1185">Reference proteome</keyword>
<keyword id="KW-0964">Secreted</keyword>
<keyword id="KW-0732">Signal</keyword>
<sequence length="249" mass="27011">MLQLWKLVLLCGVLTGTSESLLDNLGNDLSNVVDKLEPVLHEGLETVDNTLKGILEKLKVDLGVLQKSSAWQLAKQKAQEAEKLLNNVISKLLPTNTDIFGLKISNSLILDVKAEPIDDGKGLNLSFPVTANVTVAGPIIGQIINLKASLDLLTAVTIETDPQTHQPVAVLGECASDPTSISLSLLDKHSQIINKFVNSVINTLKSTVSSLLQKEICPLIRIFIHSLDVNVIQQVVDNPQHKTQLQTLI</sequence>
<gene>
    <name type="primary">BPIFA2</name>
    <name type="synonym">C20orf70</name>
    <name type="synonym">SPLUNC2</name>
    <name type="ORF">UNQ510/PRO1025</name>
</gene>
<feature type="signal peptide" evidence="2">
    <location>
        <begin position="1"/>
        <end position="18"/>
    </location>
</feature>
<feature type="chain" id="PRO_0000017184" description="BPI fold-containing family A member 2">
    <location>
        <begin position="19"/>
        <end position="249"/>
    </location>
</feature>
<feature type="glycosylation site" description="N-linked (GlcNAc...) asparagine" evidence="4">
    <location>
        <position position="124"/>
    </location>
</feature>
<feature type="glycosylation site" description="N-linked (GlcNAc...) asparagine" evidence="4">
    <location>
        <position position="132"/>
    </location>
</feature>
<feature type="disulfide bond" evidence="1">
    <location>
        <begin position="174"/>
        <end position="217"/>
    </location>
</feature>
<feature type="sequence variant" id="VAR_049751" description="In dbSNP:rs6059139.">
    <original>G</original>
    <variation>R</variation>
    <location>
        <position position="43"/>
    </location>
</feature>
<feature type="sequence variant" id="VAR_049752" description="In dbSNP:rs17304572.">
    <original>K</original>
    <variation>E</variation>
    <location>
        <position position="113"/>
    </location>
</feature>
<feature type="sequence variant" id="VAR_049753" description="In dbSNP:rs6120140.">
    <original>R</original>
    <variation>C</variation>
    <location>
        <position position="221"/>
    </location>
</feature>
<feature type="sequence conflict" description="In Ref. 1; AAL28113." evidence="6" ref="1">
    <original>G</original>
    <variation>R</variation>
    <location>
        <position position="172"/>
    </location>
</feature>
<dbReference type="EMBL" id="AF432917">
    <property type="protein sequence ID" value="AAL28113.1"/>
    <property type="molecule type" value="mRNA"/>
</dbReference>
<dbReference type="EMBL" id="AY359055">
    <property type="protein sequence ID" value="AAQ89414.1"/>
    <property type="molecule type" value="mRNA"/>
</dbReference>
<dbReference type="EMBL" id="AL121901">
    <property type="status" value="NOT_ANNOTATED_CDS"/>
    <property type="molecule type" value="Genomic_DNA"/>
</dbReference>
<dbReference type="EMBL" id="BC065726">
    <property type="protein sequence ID" value="AAH65726.1"/>
    <property type="molecule type" value="mRNA"/>
</dbReference>
<dbReference type="CCDS" id="CCDS13214.1"/>
<dbReference type="RefSeq" id="NP_001306093.1">
    <property type="nucleotide sequence ID" value="NM_001319164.2"/>
</dbReference>
<dbReference type="RefSeq" id="NP_542141.1">
    <property type="nucleotide sequence ID" value="NM_080574.4"/>
</dbReference>
<dbReference type="RefSeq" id="XP_054178968.1">
    <property type="nucleotide sequence ID" value="XM_054322993.1"/>
</dbReference>
<dbReference type="RefSeq" id="XP_054178969.1">
    <property type="nucleotide sequence ID" value="XM_054322994.1"/>
</dbReference>
<dbReference type="RefSeq" id="XP_054178970.1">
    <property type="nucleotide sequence ID" value="XM_054322995.1"/>
</dbReference>
<dbReference type="SMR" id="Q96DR5"/>
<dbReference type="BioGRID" id="126647">
    <property type="interactions" value="32"/>
</dbReference>
<dbReference type="FunCoup" id="Q96DR5">
    <property type="interactions" value="179"/>
</dbReference>
<dbReference type="IntAct" id="Q96DR5">
    <property type="interactions" value="22"/>
</dbReference>
<dbReference type="STRING" id="9606.ENSP00000253362"/>
<dbReference type="GlyCosmos" id="Q96DR5">
    <property type="glycosylation" value="2 sites, No reported glycans"/>
</dbReference>
<dbReference type="GlyGen" id="Q96DR5">
    <property type="glycosylation" value="2 sites"/>
</dbReference>
<dbReference type="iPTMnet" id="Q96DR5"/>
<dbReference type="BioMuta" id="BPIFA2"/>
<dbReference type="DMDM" id="34395850"/>
<dbReference type="jPOST" id="Q96DR5"/>
<dbReference type="MassIVE" id="Q96DR5"/>
<dbReference type="PaxDb" id="9606-ENSP00000253362"/>
<dbReference type="PeptideAtlas" id="Q96DR5"/>
<dbReference type="PRIDE" id="Q96DR5"/>
<dbReference type="ProteomicsDB" id="76306"/>
<dbReference type="Antibodypedia" id="25522">
    <property type="antibodies" value="191 antibodies from 23 providers"/>
</dbReference>
<dbReference type="DNASU" id="140683"/>
<dbReference type="Ensembl" id="ENST00000253362.6">
    <property type="protein sequence ID" value="ENSP00000253362.2"/>
    <property type="gene ID" value="ENSG00000131050.11"/>
</dbReference>
<dbReference type="Ensembl" id="ENST00000354932.6">
    <property type="protein sequence ID" value="ENSP00000347012.5"/>
    <property type="gene ID" value="ENSG00000131050.11"/>
</dbReference>
<dbReference type="GeneID" id="140683"/>
<dbReference type="KEGG" id="hsa:140683"/>
<dbReference type="MANE-Select" id="ENST00000354932.6">
    <property type="protein sequence ID" value="ENSP00000347012.5"/>
    <property type="RefSeq nucleotide sequence ID" value="NM_080574.4"/>
    <property type="RefSeq protein sequence ID" value="NP_542141.1"/>
</dbReference>
<dbReference type="UCSC" id="uc002wyo.2">
    <property type="organism name" value="human"/>
</dbReference>
<dbReference type="AGR" id="HGNC:16203"/>
<dbReference type="CTD" id="140683"/>
<dbReference type="DisGeNET" id="140683"/>
<dbReference type="GeneCards" id="BPIFA2"/>
<dbReference type="HGNC" id="HGNC:16203">
    <property type="gene designation" value="BPIFA2"/>
</dbReference>
<dbReference type="HPA" id="ENSG00000131050">
    <property type="expression patterns" value="Tissue enriched (salivary)"/>
</dbReference>
<dbReference type="neXtProt" id="NX_Q96DR5"/>
<dbReference type="OpenTargets" id="ENSG00000131050"/>
<dbReference type="PharmGKB" id="PA25781"/>
<dbReference type="VEuPathDB" id="HostDB:ENSG00000131050"/>
<dbReference type="eggNOG" id="ENOG502TE6F">
    <property type="taxonomic scope" value="Eukaryota"/>
</dbReference>
<dbReference type="GeneTree" id="ENSGT01100000263546"/>
<dbReference type="HOGENOM" id="CLU_097590_0_0_1"/>
<dbReference type="InParanoid" id="Q96DR5"/>
<dbReference type="OMA" id="CPLIHIF"/>
<dbReference type="OrthoDB" id="9838142at2759"/>
<dbReference type="PAN-GO" id="Q96DR5">
    <property type="GO annotations" value="2 GO annotations based on evolutionary models"/>
</dbReference>
<dbReference type="PhylomeDB" id="Q96DR5"/>
<dbReference type="TreeFam" id="TF337052"/>
<dbReference type="PathwayCommons" id="Q96DR5"/>
<dbReference type="Reactome" id="R-HSA-6803157">
    <property type="pathway name" value="Antimicrobial peptides"/>
</dbReference>
<dbReference type="SignaLink" id="Q96DR5"/>
<dbReference type="BioGRID-ORCS" id="140683">
    <property type="hits" value="10 hits in 1147 CRISPR screens"/>
</dbReference>
<dbReference type="ChiTaRS" id="BPIFA2">
    <property type="organism name" value="human"/>
</dbReference>
<dbReference type="GenomeRNAi" id="140683"/>
<dbReference type="Pharos" id="Q96DR5">
    <property type="development level" value="Tbio"/>
</dbReference>
<dbReference type="PRO" id="PR:Q96DR5"/>
<dbReference type="Proteomes" id="UP000005640">
    <property type="component" value="Chromosome 20"/>
</dbReference>
<dbReference type="RNAct" id="Q96DR5">
    <property type="molecule type" value="protein"/>
</dbReference>
<dbReference type="Bgee" id="ENSG00000131050">
    <property type="expression patterns" value="Expressed in parotid gland and 56 other cell types or tissues"/>
</dbReference>
<dbReference type="GO" id="GO:0070062">
    <property type="term" value="C:extracellular exosome"/>
    <property type="evidence" value="ECO:0007005"/>
    <property type="project" value="UniProtKB"/>
</dbReference>
<dbReference type="GO" id="GO:0005576">
    <property type="term" value="C:extracellular region"/>
    <property type="evidence" value="ECO:0000314"/>
    <property type="project" value="UniProtKB"/>
</dbReference>
<dbReference type="GO" id="GO:0005615">
    <property type="term" value="C:extracellular space"/>
    <property type="evidence" value="ECO:0000314"/>
    <property type="project" value="GO_Central"/>
</dbReference>
<dbReference type="GO" id="GO:0030141">
    <property type="term" value="C:secretory granule"/>
    <property type="evidence" value="ECO:0000318"/>
    <property type="project" value="GO_Central"/>
</dbReference>
<dbReference type="GO" id="GO:0001530">
    <property type="term" value="F:lipopolysaccharide binding"/>
    <property type="evidence" value="ECO:0000314"/>
    <property type="project" value="UniProtKB"/>
</dbReference>
<dbReference type="GO" id="GO:0042742">
    <property type="term" value="P:defense response to bacterium"/>
    <property type="evidence" value="ECO:0007669"/>
    <property type="project" value="UniProtKB-KW"/>
</dbReference>
<dbReference type="FunFam" id="3.15.10.10:FF:000010">
    <property type="entry name" value="BPI fold containing family A member 2"/>
    <property type="match status" value="1"/>
</dbReference>
<dbReference type="Gene3D" id="3.15.10.10">
    <property type="entry name" value="Bactericidal permeability-increasing protein, domain 1"/>
    <property type="match status" value="1"/>
</dbReference>
<dbReference type="InterPro" id="IPR017943">
    <property type="entry name" value="Bactericidal_perm-incr_a/b_dom"/>
</dbReference>
<dbReference type="InterPro" id="IPR052507">
    <property type="entry name" value="BPI_fold-antibacterial"/>
</dbReference>
<dbReference type="InterPro" id="IPR017942">
    <property type="entry name" value="Lipid-bd_serum_glycop_N"/>
</dbReference>
<dbReference type="PANTHER" id="PTHR47145">
    <property type="entry name" value="BPI FOLD-CONTAINING FAMILY A MEMBER 2"/>
    <property type="match status" value="1"/>
</dbReference>
<dbReference type="PANTHER" id="PTHR47145:SF1">
    <property type="entry name" value="BPI FOLD-CONTAINING FAMILY A MEMBER 2"/>
    <property type="match status" value="1"/>
</dbReference>
<dbReference type="Pfam" id="PF01273">
    <property type="entry name" value="LBP_BPI_CETP"/>
    <property type="match status" value="1"/>
</dbReference>
<dbReference type="SUPFAM" id="SSF55394">
    <property type="entry name" value="Bactericidal permeability-increasing protein, BPI"/>
    <property type="match status" value="1"/>
</dbReference>
<reference key="1">
    <citation type="submission" date="2001-10" db="EMBL/GenBank/DDBJ databases">
        <title>A member of the PSP/plunc family of BPI proteins is expressed in the human parotid gland.</title>
        <authorList>
            <person name="Venkatesh S.G."/>
            <person name="Geetha C."/>
            <person name="Gorr S.-U."/>
        </authorList>
    </citation>
    <scope>NUCLEOTIDE SEQUENCE [MRNA]</scope>
    <source>
        <tissue>Parotid gland</tissue>
    </source>
</reference>
<reference key="2">
    <citation type="journal article" date="2003" name="Genome Res.">
        <title>The secreted protein discovery initiative (SPDI), a large-scale effort to identify novel human secreted and transmembrane proteins: a bioinformatics assessment.</title>
        <authorList>
            <person name="Clark H.F."/>
            <person name="Gurney A.L."/>
            <person name="Abaya E."/>
            <person name="Baker K."/>
            <person name="Baldwin D.T."/>
            <person name="Brush J."/>
            <person name="Chen J."/>
            <person name="Chow B."/>
            <person name="Chui C."/>
            <person name="Crowley C."/>
            <person name="Currell B."/>
            <person name="Deuel B."/>
            <person name="Dowd P."/>
            <person name="Eaton D."/>
            <person name="Foster J.S."/>
            <person name="Grimaldi C."/>
            <person name="Gu Q."/>
            <person name="Hass P.E."/>
            <person name="Heldens S."/>
            <person name="Huang A."/>
            <person name="Kim H.S."/>
            <person name="Klimowski L."/>
            <person name="Jin Y."/>
            <person name="Johnson S."/>
            <person name="Lee J."/>
            <person name="Lewis L."/>
            <person name="Liao D."/>
            <person name="Mark M.R."/>
            <person name="Robbie E."/>
            <person name="Sanchez C."/>
            <person name="Schoenfeld J."/>
            <person name="Seshagiri S."/>
            <person name="Simmons L."/>
            <person name="Singh J."/>
            <person name="Smith V."/>
            <person name="Stinson J."/>
            <person name="Vagts A."/>
            <person name="Vandlen R.L."/>
            <person name="Watanabe C."/>
            <person name="Wieand D."/>
            <person name="Woods K."/>
            <person name="Xie M.-H."/>
            <person name="Yansura D.G."/>
            <person name="Yi S."/>
            <person name="Yu G."/>
            <person name="Yuan J."/>
            <person name="Zhang M."/>
            <person name="Zhang Z."/>
            <person name="Goddard A.D."/>
            <person name="Wood W.I."/>
            <person name="Godowski P.J."/>
            <person name="Gray A.M."/>
        </authorList>
    </citation>
    <scope>NUCLEOTIDE SEQUENCE [LARGE SCALE MRNA]</scope>
</reference>
<reference key="3">
    <citation type="journal article" date="2001" name="Nature">
        <title>The DNA sequence and comparative analysis of human chromosome 20.</title>
        <authorList>
            <person name="Deloukas P."/>
            <person name="Matthews L.H."/>
            <person name="Ashurst J.L."/>
            <person name="Burton J."/>
            <person name="Gilbert J.G.R."/>
            <person name="Jones M."/>
            <person name="Stavrides G."/>
            <person name="Almeida J.P."/>
            <person name="Babbage A.K."/>
            <person name="Bagguley C.L."/>
            <person name="Bailey J."/>
            <person name="Barlow K.F."/>
            <person name="Bates K.N."/>
            <person name="Beard L.M."/>
            <person name="Beare D.M."/>
            <person name="Beasley O.P."/>
            <person name="Bird C.P."/>
            <person name="Blakey S.E."/>
            <person name="Bridgeman A.M."/>
            <person name="Brown A.J."/>
            <person name="Buck D."/>
            <person name="Burrill W.D."/>
            <person name="Butler A.P."/>
            <person name="Carder C."/>
            <person name="Carter N.P."/>
            <person name="Chapman J.C."/>
            <person name="Clamp M."/>
            <person name="Clark G."/>
            <person name="Clark L.N."/>
            <person name="Clark S.Y."/>
            <person name="Clee C.M."/>
            <person name="Clegg S."/>
            <person name="Cobley V.E."/>
            <person name="Collier R.E."/>
            <person name="Connor R.E."/>
            <person name="Corby N.R."/>
            <person name="Coulson A."/>
            <person name="Coville G.J."/>
            <person name="Deadman R."/>
            <person name="Dhami P.D."/>
            <person name="Dunn M."/>
            <person name="Ellington A.G."/>
            <person name="Frankland J.A."/>
            <person name="Fraser A."/>
            <person name="French L."/>
            <person name="Garner P."/>
            <person name="Grafham D.V."/>
            <person name="Griffiths C."/>
            <person name="Griffiths M.N.D."/>
            <person name="Gwilliam R."/>
            <person name="Hall R.E."/>
            <person name="Hammond S."/>
            <person name="Harley J.L."/>
            <person name="Heath P.D."/>
            <person name="Ho S."/>
            <person name="Holden J.L."/>
            <person name="Howden P.J."/>
            <person name="Huckle E."/>
            <person name="Hunt A.R."/>
            <person name="Hunt S.E."/>
            <person name="Jekosch K."/>
            <person name="Johnson C.M."/>
            <person name="Johnson D."/>
            <person name="Kay M.P."/>
            <person name="Kimberley A.M."/>
            <person name="King A."/>
            <person name="Knights A."/>
            <person name="Laird G.K."/>
            <person name="Lawlor S."/>
            <person name="Lehvaeslaiho M.H."/>
            <person name="Leversha M.A."/>
            <person name="Lloyd C."/>
            <person name="Lloyd D.M."/>
            <person name="Lovell J.D."/>
            <person name="Marsh V.L."/>
            <person name="Martin S.L."/>
            <person name="McConnachie L.J."/>
            <person name="McLay K."/>
            <person name="McMurray A.A."/>
            <person name="Milne S.A."/>
            <person name="Mistry D."/>
            <person name="Moore M.J.F."/>
            <person name="Mullikin J.C."/>
            <person name="Nickerson T."/>
            <person name="Oliver K."/>
            <person name="Parker A."/>
            <person name="Patel R."/>
            <person name="Pearce T.A.V."/>
            <person name="Peck A.I."/>
            <person name="Phillimore B.J.C.T."/>
            <person name="Prathalingam S.R."/>
            <person name="Plumb R.W."/>
            <person name="Ramsay H."/>
            <person name="Rice C.M."/>
            <person name="Ross M.T."/>
            <person name="Scott C.E."/>
            <person name="Sehra H.K."/>
            <person name="Shownkeen R."/>
            <person name="Sims S."/>
            <person name="Skuce C.D."/>
            <person name="Smith M.L."/>
            <person name="Soderlund C."/>
            <person name="Steward C.A."/>
            <person name="Sulston J.E."/>
            <person name="Swann R.M."/>
            <person name="Sycamore N."/>
            <person name="Taylor R."/>
            <person name="Tee L."/>
            <person name="Thomas D.W."/>
            <person name="Thorpe A."/>
            <person name="Tracey A."/>
            <person name="Tromans A.C."/>
            <person name="Vaudin M."/>
            <person name="Wall M."/>
            <person name="Wallis J.M."/>
            <person name="Whitehead S.L."/>
            <person name="Whittaker P."/>
            <person name="Willey D.L."/>
            <person name="Williams L."/>
            <person name="Williams S.A."/>
            <person name="Wilming L."/>
            <person name="Wray P.W."/>
            <person name="Hubbard T."/>
            <person name="Durbin R.M."/>
            <person name="Bentley D.R."/>
            <person name="Beck S."/>
            <person name="Rogers J."/>
        </authorList>
    </citation>
    <scope>NUCLEOTIDE SEQUENCE [LARGE SCALE GENOMIC DNA]</scope>
</reference>
<reference key="4">
    <citation type="journal article" date="2004" name="Genome Res.">
        <title>The status, quality, and expansion of the NIH full-length cDNA project: the Mammalian Gene Collection (MGC).</title>
        <authorList>
            <consortium name="The MGC Project Team"/>
        </authorList>
    </citation>
    <scope>NUCLEOTIDE SEQUENCE [LARGE SCALE MRNA]</scope>
    <source>
        <tissue>Thyroid</tissue>
    </source>
</reference>
<reference key="5">
    <citation type="journal article" date="2002" name="Hum. Mol. Genet.">
        <title>PLUNC: a novel family of candidate host defence proteins expressed in the upper airways and nasopharynx.</title>
        <authorList>
            <person name="Bingle C.D."/>
            <person name="Craven C.J."/>
        </authorList>
    </citation>
    <scope>TISSUE SPECIFICITY</scope>
</reference>
<reference key="6">
    <citation type="journal article" date="2006" name="J. Proteome Res.">
        <title>Identification of N-linked glycoproteins in human saliva by glycoprotein capture and mass spectrometry.</title>
        <authorList>
            <person name="Ramachandran P."/>
            <person name="Boontheung P."/>
            <person name="Xie Y."/>
            <person name="Sondej M."/>
            <person name="Wong D.T."/>
            <person name="Loo J.A."/>
        </authorList>
    </citation>
    <scope>GLYCOSYLATION [LARGE SCALE ANALYSIS] AT ASN-124 AND ASN-132</scope>
    <source>
        <tissue>Saliva</tissue>
    </source>
</reference>
<reference key="7">
    <citation type="journal article" date="2014" name="Arch. Oral Biol.">
        <title>Isolation, biochemical characterization and anti-bacterial activity of BPIFA2 protein.</title>
        <authorList>
            <person name="Prokopovic V."/>
            <person name="Popovic M."/>
            <person name="Andjelkovic U."/>
            <person name="Marsavelski A."/>
            <person name="Raskovic B."/>
            <person name="Gavrovic-Jankulovic M."/>
            <person name="Polovic N."/>
        </authorList>
    </citation>
    <scope>FUNCTION</scope>
    <scope>TISSUE SPECIFICITY</scope>
</reference>
<evidence type="ECO:0000250" key="1"/>
<evidence type="ECO:0000255" key="2"/>
<evidence type="ECO:0000269" key="3">
    <source>
    </source>
</evidence>
<evidence type="ECO:0000269" key="4">
    <source>
    </source>
</evidence>
<evidence type="ECO:0000269" key="5">
    <source>
    </source>
</evidence>
<evidence type="ECO:0000305" key="6"/>
<organism>
    <name type="scientific">Homo sapiens</name>
    <name type="common">Human</name>
    <dbReference type="NCBI Taxonomy" id="9606"/>
    <lineage>
        <taxon>Eukaryota</taxon>
        <taxon>Metazoa</taxon>
        <taxon>Chordata</taxon>
        <taxon>Craniata</taxon>
        <taxon>Vertebrata</taxon>
        <taxon>Euteleostomi</taxon>
        <taxon>Mammalia</taxon>
        <taxon>Eutheria</taxon>
        <taxon>Euarchontoglires</taxon>
        <taxon>Primates</taxon>
        <taxon>Haplorrhini</taxon>
        <taxon>Catarrhini</taxon>
        <taxon>Hominidae</taxon>
        <taxon>Homo</taxon>
    </lineage>
</organism>
<name>BPIA2_HUMAN</name>
<protein>
    <recommendedName>
        <fullName>BPI fold-containing family A member 2</fullName>
    </recommendedName>
    <alternativeName>
        <fullName>Parotid secretory protein</fullName>
        <shortName>PSP</shortName>
    </alternativeName>
    <alternativeName>
        <fullName>Short palate, lung and nasal epithelium carcinoma-associated protein 2</fullName>
    </alternativeName>
</protein>
<accession>Q96DR5</accession>
<accession>Q9BQQ0</accession>
<comment type="function">
    <text evidence="5">Has strong antibacterial activity against P.aeruginosa.</text>
</comment>
<comment type="interaction">
    <interactant intactId="EBI-10284754">
        <id>Q96DR5</id>
    </interactant>
    <interactant intactId="EBI-741181">
        <id>Q6RW13</id>
        <label>AGTRAP</label>
    </interactant>
    <organismsDiffer>false</organismsDiffer>
    <experiments>3</experiments>
</comment>
<comment type="interaction">
    <interactant intactId="EBI-10284754">
        <id>Q96DR5</id>
    </interactant>
    <interactant intactId="EBI-11522760">
        <id>Q6RW13-2</id>
        <label>AGTRAP</label>
    </interactant>
    <organismsDiffer>false</organismsDiffer>
    <experiments>3</experiments>
</comment>
<comment type="interaction">
    <interactant intactId="EBI-10284754">
        <id>Q96DR5</id>
    </interactant>
    <interactant intactId="EBI-1054315">
        <id>Q9NX76</id>
        <label>CMTM6</label>
    </interactant>
    <organismsDiffer>false</organismsDiffer>
    <experiments>3</experiments>
</comment>
<comment type="subcellular location">
    <subcellularLocation>
        <location evidence="1">Secreted</location>
    </subcellularLocation>
</comment>
<comment type="tissue specificity">
    <text evidence="3 5">Detected in submandibular gland. Secreted into saliva.</text>
</comment>
<comment type="similarity">
    <text evidence="6">Belongs to the BPI/LBP/Plunc superfamily. Plunc family.</text>
</comment>
<proteinExistence type="evidence at protein level"/>